<protein>
    <recommendedName>
        <fullName evidence="2">Translation initiation factor IF-2</fullName>
    </recommendedName>
</protein>
<keyword id="KW-0963">Cytoplasm</keyword>
<keyword id="KW-0342">GTP-binding</keyword>
<keyword id="KW-0396">Initiation factor</keyword>
<keyword id="KW-0547">Nucleotide-binding</keyword>
<keyword id="KW-0648">Protein biosynthesis</keyword>
<comment type="function">
    <text evidence="2">One of the essential components for the initiation of protein synthesis. Protects formylmethionyl-tRNA from spontaneous hydrolysis and promotes its binding to the 30S ribosomal subunits. Also involved in the hydrolysis of GTP during the formation of the 70S ribosomal complex.</text>
</comment>
<comment type="subcellular location">
    <subcellularLocation>
        <location evidence="2">Cytoplasm</location>
    </subcellularLocation>
</comment>
<comment type="similarity">
    <text evidence="2">Belongs to the TRAFAC class translation factor GTPase superfamily. Classic translation factor GTPase family. IF-2 subfamily.</text>
</comment>
<gene>
    <name evidence="2" type="primary">infB</name>
    <name type="ordered locus">RT0539</name>
</gene>
<feature type="chain" id="PRO_0000228238" description="Translation initiation factor IF-2">
    <location>
        <begin position="1"/>
        <end position="831"/>
    </location>
</feature>
<feature type="domain" description="tr-type G">
    <location>
        <begin position="329"/>
        <end position="499"/>
    </location>
</feature>
<feature type="region of interest" description="G1" evidence="1">
    <location>
        <begin position="338"/>
        <end position="345"/>
    </location>
</feature>
<feature type="region of interest" description="G2" evidence="1">
    <location>
        <begin position="363"/>
        <end position="367"/>
    </location>
</feature>
<feature type="region of interest" description="G3" evidence="1">
    <location>
        <begin position="385"/>
        <end position="388"/>
    </location>
</feature>
<feature type="region of interest" description="G4" evidence="1">
    <location>
        <begin position="439"/>
        <end position="442"/>
    </location>
</feature>
<feature type="region of interest" description="G5" evidence="1">
    <location>
        <begin position="475"/>
        <end position="477"/>
    </location>
</feature>
<feature type="binding site" evidence="2">
    <location>
        <begin position="338"/>
        <end position="345"/>
    </location>
    <ligand>
        <name>GTP</name>
        <dbReference type="ChEBI" id="CHEBI:37565"/>
    </ligand>
</feature>
<feature type="binding site" evidence="2">
    <location>
        <begin position="385"/>
        <end position="389"/>
    </location>
    <ligand>
        <name>GTP</name>
        <dbReference type="ChEBI" id="CHEBI:37565"/>
    </ligand>
</feature>
<feature type="binding site" evidence="2">
    <location>
        <begin position="439"/>
        <end position="442"/>
    </location>
    <ligand>
        <name>GTP</name>
        <dbReference type="ChEBI" id="CHEBI:37565"/>
    </ligand>
</feature>
<reference key="1">
    <citation type="journal article" date="2004" name="J. Bacteriol.">
        <title>Complete genome sequence of Rickettsia typhi and comparison with sequences of other Rickettsiae.</title>
        <authorList>
            <person name="McLeod M.P."/>
            <person name="Qin X."/>
            <person name="Karpathy S.E."/>
            <person name="Gioia J."/>
            <person name="Highlander S.K."/>
            <person name="Fox G.E."/>
            <person name="McNeill T.Z."/>
            <person name="Jiang H."/>
            <person name="Muzny D."/>
            <person name="Jacob L.S."/>
            <person name="Hawes A.C."/>
            <person name="Sodergren E."/>
            <person name="Gill R."/>
            <person name="Hume J."/>
            <person name="Morgan M."/>
            <person name="Fan G."/>
            <person name="Amin A.G."/>
            <person name="Gibbs R.A."/>
            <person name="Hong C."/>
            <person name="Yu X.-J."/>
            <person name="Walker D.H."/>
            <person name="Weinstock G.M."/>
        </authorList>
    </citation>
    <scope>NUCLEOTIDE SEQUENCE [LARGE SCALE GENOMIC DNA]</scope>
    <source>
        <strain>ATCC VR-144 / Wilmington</strain>
    </source>
</reference>
<proteinExistence type="inferred from homology"/>
<sequence length="831" mass="91282">MTDNQEIKPKKLTLGNSKLLLNKSFDSLTGVQSFVNAKSKTLVEVRKSSIGSTTTISLNKERNSLDQTVIDSNKEEFNRRLSILKKAAEQSKLYDSAQISTLSKLASINQSVNSKNEQFTTDKAVEQKQQDIEDTKVEIGTKIVQDDEDIRSQIPNKKKETFAKSLLVGMRTRYGIEAESALEKIGDNKVVVPKIKLEEPKKFKKADLFNMLSDDENGSGRTRSLASIKRAREKEKRKLVSQIPEKVYREVTIPEVIGVGDLANAMSERVADVIKELMKLGILANASQTIDADTAELVATNLGHTVTRVQESDVENVLINDDKVEDLRTRAPVVTVMGHVDHGKTSLLDALKSTDIAAGELGGITQHIGAYRVTLSDCKAITFIDTPGHEAFSEMRSRGAKVTDIVIIVVAADDGIKTQTVEAINHAKAAGVPIIVAINKIDKPDIDIERIKNELYVHEIIGEEAGGDVIFIPISALKKINLDKLEEAILLISEMQDLKASPFGLAAGVVIESKIEKGRGTLTTILVQRGTLRNGDIIIAGTSYGKVKKMINDKGREILEATPSVPVEIQGLNEVPFAGDQFNVVQNEKQAKDIAEYRIRLAKEKKISVTSRSSLEELLLKASGNSKIKELPLIIKCDVQGSIEAIAGSLLKLPSDEIKLRILHSGVGPITESDVSLAHVSSAIVVGFNVRAGTNALTAAEKTKVDIRYYSIIYNLIDDVKAIMSGMLDPIVREQYIGSVEIRQVFNITKIGKIAGSYVTKGIIKKGAGVRLLRDNVVIHAGKLKTLKRFKDEVKEVREGYECGIAFENYEDIREGDTVEVFELVQEQRQL</sequence>
<accession>Q68WI4</accession>
<name>IF2_RICTY</name>
<dbReference type="EMBL" id="AE017197">
    <property type="protein sequence ID" value="AAU04008.1"/>
    <property type="molecule type" value="Genomic_DNA"/>
</dbReference>
<dbReference type="RefSeq" id="WP_011190989.1">
    <property type="nucleotide sequence ID" value="NC_006142.1"/>
</dbReference>
<dbReference type="SMR" id="Q68WI4"/>
<dbReference type="KEGG" id="rty:RT0539"/>
<dbReference type="eggNOG" id="COG0532">
    <property type="taxonomic scope" value="Bacteria"/>
</dbReference>
<dbReference type="HOGENOM" id="CLU_006301_10_2_5"/>
<dbReference type="OrthoDB" id="9811804at2"/>
<dbReference type="Proteomes" id="UP000000604">
    <property type="component" value="Chromosome"/>
</dbReference>
<dbReference type="GO" id="GO:0005737">
    <property type="term" value="C:cytoplasm"/>
    <property type="evidence" value="ECO:0007669"/>
    <property type="project" value="UniProtKB-SubCell"/>
</dbReference>
<dbReference type="GO" id="GO:0005525">
    <property type="term" value="F:GTP binding"/>
    <property type="evidence" value="ECO:0007669"/>
    <property type="project" value="UniProtKB-KW"/>
</dbReference>
<dbReference type="GO" id="GO:0003924">
    <property type="term" value="F:GTPase activity"/>
    <property type="evidence" value="ECO:0007669"/>
    <property type="project" value="UniProtKB-UniRule"/>
</dbReference>
<dbReference type="GO" id="GO:0097216">
    <property type="term" value="F:guanosine tetraphosphate binding"/>
    <property type="evidence" value="ECO:0007669"/>
    <property type="project" value="UniProtKB-ARBA"/>
</dbReference>
<dbReference type="GO" id="GO:0003743">
    <property type="term" value="F:translation initiation factor activity"/>
    <property type="evidence" value="ECO:0007669"/>
    <property type="project" value="UniProtKB-UniRule"/>
</dbReference>
<dbReference type="CDD" id="cd01887">
    <property type="entry name" value="IF2_eIF5B"/>
    <property type="match status" value="1"/>
</dbReference>
<dbReference type="CDD" id="cd03702">
    <property type="entry name" value="IF2_mtIF2_II"/>
    <property type="match status" value="1"/>
</dbReference>
<dbReference type="CDD" id="cd03692">
    <property type="entry name" value="mtIF2_IVc"/>
    <property type="match status" value="1"/>
</dbReference>
<dbReference type="FunFam" id="2.40.30.10:FF:000007">
    <property type="entry name" value="Translation initiation factor IF-2"/>
    <property type="match status" value="1"/>
</dbReference>
<dbReference type="FunFam" id="2.40.30.10:FF:000008">
    <property type="entry name" value="Translation initiation factor IF-2"/>
    <property type="match status" value="1"/>
</dbReference>
<dbReference type="FunFam" id="3.40.50.10050:FF:000001">
    <property type="entry name" value="Translation initiation factor IF-2"/>
    <property type="match status" value="1"/>
</dbReference>
<dbReference type="FunFam" id="3.40.50.300:FF:000019">
    <property type="entry name" value="Translation initiation factor IF-2"/>
    <property type="match status" value="1"/>
</dbReference>
<dbReference type="Gene3D" id="3.40.50.300">
    <property type="entry name" value="P-loop containing nucleotide triphosphate hydrolases"/>
    <property type="match status" value="1"/>
</dbReference>
<dbReference type="Gene3D" id="2.40.30.10">
    <property type="entry name" value="Translation factors"/>
    <property type="match status" value="2"/>
</dbReference>
<dbReference type="Gene3D" id="3.40.50.10050">
    <property type="entry name" value="Translation initiation factor IF- 2, domain 3"/>
    <property type="match status" value="1"/>
</dbReference>
<dbReference type="HAMAP" id="MF_00100_B">
    <property type="entry name" value="IF_2_B"/>
    <property type="match status" value="1"/>
</dbReference>
<dbReference type="InterPro" id="IPR053905">
    <property type="entry name" value="EF-G-like_DII"/>
</dbReference>
<dbReference type="InterPro" id="IPR004161">
    <property type="entry name" value="EFTu-like_2"/>
</dbReference>
<dbReference type="InterPro" id="IPR044145">
    <property type="entry name" value="IF2_II"/>
</dbReference>
<dbReference type="InterPro" id="IPR006847">
    <property type="entry name" value="IF2_N"/>
</dbReference>
<dbReference type="InterPro" id="IPR027417">
    <property type="entry name" value="P-loop_NTPase"/>
</dbReference>
<dbReference type="InterPro" id="IPR005225">
    <property type="entry name" value="Small_GTP-bd"/>
</dbReference>
<dbReference type="InterPro" id="IPR000795">
    <property type="entry name" value="T_Tr_GTP-bd_dom"/>
</dbReference>
<dbReference type="InterPro" id="IPR000178">
    <property type="entry name" value="TF_IF2_bacterial-like"/>
</dbReference>
<dbReference type="InterPro" id="IPR015760">
    <property type="entry name" value="TIF_IF2"/>
</dbReference>
<dbReference type="InterPro" id="IPR023115">
    <property type="entry name" value="TIF_IF2_dom3"/>
</dbReference>
<dbReference type="InterPro" id="IPR036925">
    <property type="entry name" value="TIF_IF2_dom3_sf"/>
</dbReference>
<dbReference type="InterPro" id="IPR009000">
    <property type="entry name" value="Transl_B-barrel_sf"/>
</dbReference>
<dbReference type="NCBIfam" id="TIGR00487">
    <property type="entry name" value="IF-2"/>
    <property type="match status" value="1"/>
</dbReference>
<dbReference type="NCBIfam" id="TIGR00231">
    <property type="entry name" value="small_GTP"/>
    <property type="match status" value="1"/>
</dbReference>
<dbReference type="PANTHER" id="PTHR43381:SF5">
    <property type="entry name" value="TR-TYPE G DOMAIN-CONTAINING PROTEIN"/>
    <property type="match status" value="1"/>
</dbReference>
<dbReference type="PANTHER" id="PTHR43381">
    <property type="entry name" value="TRANSLATION INITIATION FACTOR IF-2-RELATED"/>
    <property type="match status" value="1"/>
</dbReference>
<dbReference type="Pfam" id="PF22042">
    <property type="entry name" value="EF-G_D2"/>
    <property type="match status" value="1"/>
</dbReference>
<dbReference type="Pfam" id="PF00009">
    <property type="entry name" value="GTP_EFTU"/>
    <property type="match status" value="1"/>
</dbReference>
<dbReference type="Pfam" id="PF03144">
    <property type="entry name" value="GTP_EFTU_D2"/>
    <property type="match status" value="1"/>
</dbReference>
<dbReference type="Pfam" id="PF11987">
    <property type="entry name" value="IF-2"/>
    <property type="match status" value="1"/>
</dbReference>
<dbReference type="Pfam" id="PF04760">
    <property type="entry name" value="IF2_N"/>
    <property type="match status" value="1"/>
</dbReference>
<dbReference type="SUPFAM" id="SSF52156">
    <property type="entry name" value="Initiation factor IF2/eIF5b, domain 3"/>
    <property type="match status" value="1"/>
</dbReference>
<dbReference type="SUPFAM" id="SSF52540">
    <property type="entry name" value="P-loop containing nucleoside triphosphate hydrolases"/>
    <property type="match status" value="1"/>
</dbReference>
<dbReference type="SUPFAM" id="SSF50447">
    <property type="entry name" value="Translation proteins"/>
    <property type="match status" value="2"/>
</dbReference>
<dbReference type="PROSITE" id="PS51722">
    <property type="entry name" value="G_TR_2"/>
    <property type="match status" value="1"/>
</dbReference>
<dbReference type="PROSITE" id="PS01176">
    <property type="entry name" value="IF2"/>
    <property type="match status" value="1"/>
</dbReference>
<evidence type="ECO:0000250" key="1"/>
<evidence type="ECO:0000255" key="2">
    <source>
        <dbReference type="HAMAP-Rule" id="MF_00100"/>
    </source>
</evidence>
<organism>
    <name type="scientific">Rickettsia typhi (strain ATCC VR-144 / Wilmington)</name>
    <dbReference type="NCBI Taxonomy" id="257363"/>
    <lineage>
        <taxon>Bacteria</taxon>
        <taxon>Pseudomonadati</taxon>
        <taxon>Pseudomonadota</taxon>
        <taxon>Alphaproteobacteria</taxon>
        <taxon>Rickettsiales</taxon>
        <taxon>Rickettsiaceae</taxon>
        <taxon>Rickettsieae</taxon>
        <taxon>Rickettsia</taxon>
        <taxon>typhus group</taxon>
    </lineage>
</organism>